<feature type="chain" id="PRO_1000078102" description="Dihydroorotase">
    <location>
        <begin position="1"/>
        <end position="348"/>
    </location>
</feature>
<feature type="active site" evidence="1">
    <location>
        <position position="251"/>
    </location>
</feature>
<feature type="binding site" evidence="1">
    <location>
        <position position="17"/>
    </location>
    <ligand>
        <name>Zn(2+)</name>
        <dbReference type="ChEBI" id="CHEBI:29105"/>
        <label>1</label>
    </ligand>
</feature>
<feature type="binding site" evidence="1">
    <location>
        <begin position="19"/>
        <end position="21"/>
    </location>
    <ligand>
        <name>substrate</name>
    </ligand>
</feature>
<feature type="binding site" evidence="1">
    <location>
        <position position="19"/>
    </location>
    <ligand>
        <name>Zn(2+)</name>
        <dbReference type="ChEBI" id="CHEBI:29105"/>
        <label>1</label>
    </ligand>
</feature>
<feature type="binding site" evidence="1">
    <location>
        <position position="45"/>
    </location>
    <ligand>
        <name>substrate</name>
    </ligand>
</feature>
<feature type="binding site" description="via carbamate group" evidence="1">
    <location>
        <position position="103"/>
    </location>
    <ligand>
        <name>Zn(2+)</name>
        <dbReference type="ChEBI" id="CHEBI:29105"/>
        <label>1</label>
    </ligand>
</feature>
<feature type="binding site" description="via carbamate group" evidence="1">
    <location>
        <position position="103"/>
    </location>
    <ligand>
        <name>Zn(2+)</name>
        <dbReference type="ChEBI" id="CHEBI:29105"/>
        <label>2</label>
    </ligand>
</feature>
<feature type="binding site" evidence="1">
    <location>
        <position position="140"/>
    </location>
    <ligand>
        <name>substrate</name>
    </ligand>
</feature>
<feature type="binding site" evidence="1">
    <location>
        <position position="140"/>
    </location>
    <ligand>
        <name>Zn(2+)</name>
        <dbReference type="ChEBI" id="CHEBI:29105"/>
        <label>2</label>
    </ligand>
</feature>
<feature type="binding site" evidence="1">
    <location>
        <position position="178"/>
    </location>
    <ligand>
        <name>Zn(2+)</name>
        <dbReference type="ChEBI" id="CHEBI:29105"/>
        <label>2</label>
    </ligand>
</feature>
<feature type="binding site" evidence="1">
    <location>
        <position position="223"/>
    </location>
    <ligand>
        <name>substrate</name>
    </ligand>
</feature>
<feature type="binding site" evidence="1">
    <location>
        <position position="251"/>
    </location>
    <ligand>
        <name>Zn(2+)</name>
        <dbReference type="ChEBI" id="CHEBI:29105"/>
        <label>1</label>
    </ligand>
</feature>
<feature type="binding site" evidence="1">
    <location>
        <position position="255"/>
    </location>
    <ligand>
        <name>substrate</name>
    </ligand>
</feature>
<feature type="binding site" evidence="1">
    <location>
        <position position="267"/>
    </location>
    <ligand>
        <name>substrate</name>
    </ligand>
</feature>
<feature type="modified residue" description="N6-carboxylysine" evidence="1">
    <location>
        <position position="103"/>
    </location>
</feature>
<gene>
    <name evidence="1" type="primary">pyrC</name>
    <name type="ordered locus">SPAB_02367</name>
</gene>
<organism>
    <name type="scientific">Salmonella paratyphi B (strain ATCC BAA-1250 / SPB7)</name>
    <dbReference type="NCBI Taxonomy" id="1016998"/>
    <lineage>
        <taxon>Bacteria</taxon>
        <taxon>Pseudomonadati</taxon>
        <taxon>Pseudomonadota</taxon>
        <taxon>Gammaproteobacteria</taxon>
        <taxon>Enterobacterales</taxon>
        <taxon>Enterobacteriaceae</taxon>
        <taxon>Salmonella</taxon>
    </lineage>
</organism>
<comment type="function">
    <text evidence="1">Catalyzes the reversible cyclization of carbamoyl aspartate to dihydroorotate.</text>
</comment>
<comment type="catalytic activity">
    <reaction evidence="1">
        <text>(S)-dihydroorotate + H2O = N-carbamoyl-L-aspartate + H(+)</text>
        <dbReference type="Rhea" id="RHEA:24296"/>
        <dbReference type="ChEBI" id="CHEBI:15377"/>
        <dbReference type="ChEBI" id="CHEBI:15378"/>
        <dbReference type="ChEBI" id="CHEBI:30864"/>
        <dbReference type="ChEBI" id="CHEBI:32814"/>
        <dbReference type="EC" id="3.5.2.3"/>
    </reaction>
</comment>
<comment type="cofactor">
    <cofactor evidence="1">
        <name>Zn(2+)</name>
        <dbReference type="ChEBI" id="CHEBI:29105"/>
    </cofactor>
    <text evidence="1">Binds 2 Zn(2+) ions per subunit.</text>
</comment>
<comment type="pathway">
    <text evidence="1">Pyrimidine metabolism; UMP biosynthesis via de novo pathway; (S)-dihydroorotate from bicarbonate: step 3/3.</text>
</comment>
<comment type="subunit">
    <text evidence="1">Homodimer.</text>
</comment>
<comment type="similarity">
    <text evidence="1">Belongs to the metallo-dependent hydrolases superfamily. DHOase family. Class II DHOase subfamily.</text>
</comment>
<protein>
    <recommendedName>
        <fullName evidence="1">Dihydroorotase</fullName>
        <shortName evidence="1">DHOase</shortName>
        <ecNumber evidence="1">3.5.2.3</ecNumber>
    </recommendedName>
</protein>
<keyword id="KW-0378">Hydrolase</keyword>
<keyword id="KW-0479">Metal-binding</keyword>
<keyword id="KW-0665">Pyrimidine biosynthesis</keyword>
<keyword id="KW-0862">Zinc</keyword>
<reference key="1">
    <citation type="submission" date="2007-11" db="EMBL/GenBank/DDBJ databases">
        <authorList>
            <consortium name="The Salmonella enterica serovar Paratyphi B Genome Sequencing Project"/>
            <person name="McClelland M."/>
            <person name="Sanderson E.K."/>
            <person name="Porwollik S."/>
            <person name="Spieth J."/>
            <person name="Clifton W.S."/>
            <person name="Fulton R."/>
            <person name="Cordes M."/>
            <person name="Wollam A."/>
            <person name="Shah N."/>
            <person name="Pepin K."/>
            <person name="Bhonagiri V."/>
            <person name="Nash W."/>
            <person name="Johnson M."/>
            <person name="Thiruvilangam P."/>
            <person name="Wilson R."/>
        </authorList>
    </citation>
    <scope>NUCLEOTIDE SEQUENCE [LARGE SCALE GENOMIC DNA]</scope>
    <source>
        <strain>ATCC BAA-1250 / SPB7</strain>
    </source>
</reference>
<accession>A9N5P9</accession>
<name>PYRC_SALPB</name>
<proteinExistence type="inferred from homology"/>
<dbReference type="EC" id="3.5.2.3" evidence="1"/>
<dbReference type="EMBL" id="CP000886">
    <property type="protein sequence ID" value="ABX67749.1"/>
    <property type="molecule type" value="Genomic_DNA"/>
</dbReference>
<dbReference type="RefSeq" id="WP_000126593.1">
    <property type="nucleotide sequence ID" value="NC_010102.1"/>
</dbReference>
<dbReference type="SMR" id="A9N5P9"/>
<dbReference type="MEROPS" id="M38.A02"/>
<dbReference type="KEGG" id="spq:SPAB_02367"/>
<dbReference type="PATRIC" id="fig|1016998.12.peg.2239"/>
<dbReference type="HOGENOM" id="CLU_041558_1_0_6"/>
<dbReference type="BioCyc" id="SENT1016998:SPAB_RS09640-MONOMER"/>
<dbReference type="UniPathway" id="UPA00070">
    <property type="reaction ID" value="UER00117"/>
</dbReference>
<dbReference type="Proteomes" id="UP000008556">
    <property type="component" value="Chromosome"/>
</dbReference>
<dbReference type="GO" id="GO:0005829">
    <property type="term" value="C:cytosol"/>
    <property type="evidence" value="ECO:0007669"/>
    <property type="project" value="TreeGrafter"/>
</dbReference>
<dbReference type="GO" id="GO:0004151">
    <property type="term" value="F:dihydroorotase activity"/>
    <property type="evidence" value="ECO:0007669"/>
    <property type="project" value="UniProtKB-UniRule"/>
</dbReference>
<dbReference type="GO" id="GO:0008270">
    <property type="term" value="F:zinc ion binding"/>
    <property type="evidence" value="ECO:0007669"/>
    <property type="project" value="UniProtKB-UniRule"/>
</dbReference>
<dbReference type="GO" id="GO:0006207">
    <property type="term" value="P:'de novo' pyrimidine nucleobase biosynthetic process"/>
    <property type="evidence" value="ECO:0007669"/>
    <property type="project" value="TreeGrafter"/>
</dbReference>
<dbReference type="GO" id="GO:0044205">
    <property type="term" value="P:'de novo' UMP biosynthetic process"/>
    <property type="evidence" value="ECO:0007669"/>
    <property type="project" value="UniProtKB-UniRule"/>
</dbReference>
<dbReference type="CDD" id="cd01294">
    <property type="entry name" value="DHOase"/>
    <property type="match status" value="1"/>
</dbReference>
<dbReference type="FunFam" id="3.20.20.140:FF:000006">
    <property type="entry name" value="Dihydroorotase"/>
    <property type="match status" value="1"/>
</dbReference>
<dbReference type="Gene3D" id="3.20.20.140">
    <property type="entry name" value="Metal-dependent hydrolases"/>
    <property type="match status" value="1"/>
</dbReference>
<dbReference type="HAMAP" id="MF_00219">
    <property type="entry name" value="PyrC_classII"/>
    <property type="match status" value="1"/>
</dbReference>
<dbReference type="InterPro" id="IPR006680">
    <property type="entry name" value="Amidohydro-rel"/>
</dbReference>
<dbReference type="InterPro" id="IPR004721">
    <property type="entry name" value="DHOdimr"/>
</dbReference>
<dbReference type="InterPro" id="IPR002195">
    <property type="entry name" value="Dihydroorotase_CS"/>
</dbReference>
<dbReference type="InterPro" id="IPR032466">
    <property type="entry name" value="Metal_Hydrolase"/>
</dbReference>
<dbReference type="NCBIfam" id="TIGR00856">
    <property type="entry name" value="pyrC_dimer"/>
    <property type="match status" value="1"/>
</dbReference>
<dbReference type="PANTHER" id="PTHR43137">
    <property type="entry name" value="DIHYDROOROTASE"/>
    <property type="match status" value="1"/>
</dbReference>
<dbReference type="PANTHER" id="PTHR43137:SF1">
    <property type="entry name" value="DIHYDROOROTASE"/>
    <property type="match status" value="1"/>
</dbReference>
<dbReference type="Pfam" id="PF01979">
    <property type="entry name" value="Amidohydro_1"/>
    <property type="match status" value="1"/>
</dbReference>
<dbReference type="PIRSF" id="PIRSF001237">
    <property type="entry name" value="DHOdimr"/>
    <property type="match status" value="1"/>
</dbReference>
<dbReference type="SUPFAM" id="SSF51556">
    <property type="entry name" value="Metallo-dependent hydrolases"/>
    <property type="match status" value="1"/>
</dbReference>
<dbReference type="PROSITE" id="PS00482">
    <property type="entry name" value="DIHYDROOROTASE_1"/>
    <property type="match status" value="1"/>
</dbReference>
<dbReference type="PROSITE" id="PS00483">
    <property type="entry name" value="DIHYDROOROTASE_2"/>
    <property type="match status" value="1"/>
</dbReference>
<evidence type="ECO:0000255" key="1">
    <source>
        <dbReference type="HAMAP-Rule" id="MF_00219"/>
    </source>
</evidence>
<sequence length="348" mass="38725">MTAPSQVLKIRRPDDWHVHLRDGDMLKTVVPYTSEIYGRAIVMPNLASPITTVDAAIAYRQRILDAVPAGHDFTPLMTCYLTDSLDADELERGFHEGVFTAAKLYPANATTNSSHGVTSVDAIMPVLERMEKLGMPLLVHGEVTHADVDIFDREARFIDTVMEPLRQRLTTLKVVFEHITTKDAAQYVRDGNDYLAATITPQHLMFNRNDMLVGGIRPHLYCLPILKRNIHQQALRELVASGFTRAFLGTDSAPHSRHRKETSCGCAGCFNAPSALCSYAAVFEEMNALAHFEAFCSLNGPQFYGLPVNTGWVELVRDEQQVPENIALADDSLVPFLAGETVRWSVKK</sequence>